<evidence type="ECO:0000255" key="1">
    <source>
        <dbReference type="HAMAP-Rule" id="MF_00081"/>
    </source>
</evidence>
<organism>
    <name type="scientific">Staphylococcus aureus (strain JH9)</name>
    <dbReference type="NCBI Taxonomy" id="359786"/>
    <lineage>
        <taxon>Bacteria</taxon>
        <taxon>Bacillati</taxon>
        <taxon>Bacillota</taxon>
        <taxon>Bacilli</taxon>
        <taxon>Bacillales</taxon>
        <taxon>Staphylococcaceae</taxon>
        <taxon>Staphylococcus</taxon>
    </lineage>
</organism>
<comment type="function">
    <text evidence="1">Negative regulator of class I heat shock genes (grpE-dnaK-dnaJ and groELS operons). Prevents heat-shock induction of these operons.</text>
</comment>
<comment type="similarity">
    <text evidence="1">Belongs to the HrcA family.</text>
</comment>
<protein>
    <recommendedName>
        <fullName evidence="1">Heat-inducible transcription repressor HrcA</fullName>
    </recommendedName>
</protein>
<reference key="1">
    <citation type="submission" date="2007-05" db="EMBL/GenBank/DDBJ databases">
        <title>Complete sequence of chromosome of Staphylococcus aureus subsp. aureus JH9.</title>
        <authorList>
            <consortium name="US DOE Joint Genome Institute"/>
            <person name="Copeland A."/>
            <person name="Lucas S."/>
            <person name="Lapidus A."/>
            <person name="Barry K."/>
            <person name="Detter J.C."/>
            <person name="Glavina del Rio T."/>
            <person name="Hammon N."/>
            <person name="Israni S."/>
            <person name="Pitluck S."/>
            <person name="Chain P."/>
            <person name="Malfatti S."/>
            <person name="Shin M."/>
            <person name="Vergez L."/>
            <person name="Schmutz J."/>
            <person name="Larimer F."/>
            <person name="Land M."/>
            <person name="Hauser L."/>
            <person name="Kyrpides N."/>
            <person name="Kim E."/>
            <person name="Tomasz A."/>
            <person name="Richardson P."/>
        </authorList>
    </citation>
    <scope>NUCLEOTIDE SEQUENCE [LARGE SCALE GENOMIC DNA]</scope>
    <source>
        <strain>JH9</strain>
    </source>
</reference>
<proteinExistence type="inferred from homology"/>
<keyword id="KW-0678">Repressor</keyword>
<keyword id="KW-0346">Stress response</keyword>
<keyword id="KW-0804">Transcription</keyword>
<keyword id="KW-0805">Transcription regulation</keyword>
<dbReference type="EMBL" id="CP000703">
    <property type="protein sequence ID" value="ABQ49433.1"/>
    <property type="molecule type" value="Genomic_DNA"/>
</dbReference>
<dbReference type="RefSeq" id="WP_000627144.1">
    <property type="nucleotide sequence ID" value="NC_009487.1"/>
</dbReference>
<dbReference type="SMR" id="A5ITB0"/>
<dbReference type="KEGG" id="saj:SaurJH9_1640"/>
<dbReference type="HOGENOM" id="CLU_050019_1_0_9"/>
<dbReference type="GO" id="GO:0003677">
    <property type="term" value="F:DNA binding"/>
    <property type="evidence" value="ECO:0007669"/>
    <property type="project" value="InterPro"/>
</dbReference>
<dbReference type="GO" id="GO:0045892">
    <property type="term" value="P:negative regulation of DNA-templated transcription"/>
    <property type="evidence" value="ECO:0007669"/>
    <property type="project" value="UniProtKB-UniRule"/>
</dbReference>
<dbReference type="FunFam" id="1.10.10.10:FF:000049">
    <property type="entry name" value="Heat-inducible transcription repressor HrcA"/>
    <property type="match status" value="1"/>
</dbReference>
<dbReference type="Gene3D" id="3.30.450.40">
    <property type="match status" value="1"/>
</dbReference>
<dbReference type="Gene3D" id="3.30.390.60">
    <property type="entry name" value="Heat-inducible transcription repressor hrca homolog, domain 3"/>
    <property type="match status" value="1"/>
</dbReference>
<dbReference type="Gene3D" id="1.10.10.10">
    <property type="entry name" value="Winged helix-like DNA-binding domain superfamily/Winged helix DNA-binding domain"/>
    <property type="match status" value="1"/>
</dbReference>
<dbReference type="HAMAP" id="MF_00081">
    <property type="entry name" value="HrcA"/>
    <property type="match status" value="1"/>
</dbReference>
<dbReference type="InterPro" id="IPR029016">
    <property type="entry name" value="GAF-like_dom_sf"/>
</dbReference>
<dbReference type="InterPro" id="IPR002571">
    <property type="entry name" value="HrcA"/>
</dbReference>
<dbReference type="InterPro" id="IPR021153">
    <property type="entry name" value="HrcA_C"/>
</dbReference>
<dbReference type="InterPro" id="IPR036388">
    <property type="entry name" value="WH-like_DNA-bd_sf"/>
</dbReference>
<dbReference type="InterPro" id="IPR036390">
    <property type="entry name" value="WH_DNA-bd_sf"/>
</dbReference>
<dbReference type="InterPro" id="IPR023120">
    <property type="entry name" value="WHTH_transcript_rep_HrcA_IDD"/>
</dbReference>
<dbReference type="NCBIfam" id="TIGR00331">
    <property type="entry name" value="hrcA"/>
    <property type="match status" value="1"/>
</dbReference>
<dbReference type="PANTHER" id="PTHR34824">
    <property type="entry name" value="HEAT-INDUCIBLE TRANSCRIPTION REPRESSOR HRCA"/>
    <property type="match status" value="1"/>
</dbReference>
<dbReference type="PANTHER" id="PTHR34824:SF1">
    <property type="entry name" value="HEAT-INDUCIBLE TRANSCRIPTION REPRESSOR HRCA"/>
    <property type="match status" value="1"/>
</dbReference>
<dbReference type="Pfam" id="PF01628">
    <property type="entry name" value="HrcA"/>
    <property type="match status" value="1"/>
</dbReference>
<dbReference type="PIRSF" id="PIRSF005485">
    <property type="entry name" value="HrcA"/>
    <property type="match status" value="1"/>
</dbReference>
<dbReference type="SUPFAM" id="SSF55781">
    <property type="entry name" value="GAF domain-like"/>
    <property type="match status" value="1"/>
</dbReference>
<dbReference type="SUPFAM" id="SSF46785">
    <property type="entry name" value="Winged helix' DNA-binding domain"/>
    <property type="match status" value="1"/>
</dbReference>
<sequence>MITDRQLSILNAIVEDYVDFGQPVGSKTLIERHNLNVSPATIRNEMKQLEDLNYIEKTHSSSGRSPSQLGFRYYVNRLLEQTSHQKTNKLRRLNQLLVENQYDVSSALTYFADELSNISQYTTLVVHPNHKQDIINNVHLIRANPNLVIMVIVFSSGHVEHVHLASDIPFSNDKLNTISNFVTNKLTEFNQNLQDDIVSFVQSEQEEIFINKLINTMNNHISNQSNSIYMGGKVKLIDALNESNVSSIQPILQYIESNRIAELLQDISSPNINVKIGNEIDDSLSDISIVTSQYHFDETLKGQIAVIGPTAMHYQNVIQLLNRIW</sequence>
<accession>A5ITB0</accession>
<name>HRCA_STAA9</name>
<gene>
    <name evidence="1" type="primary">hrcA</name>
    <name type="ordered locus">SaurJH9_1640</name>
</gene>
<feature type="chain" id="PRO_1000075295" description="Heat-inducible transcription repressor HrcA">
    <location>
        <begin position="1"/>
        <end position="325"/>
    </location>
</feature>